<comment type="function">
    <text evidence="1">Involved in the synthesis of meso-diaminopimelate (m-DAP or DL-DAP), required for both lysine and peptidoglycan biosynthesis. Catalyzes the direct conversion of tetrahydrodipicolinate to LL-diaminopimelate.</text>
</comment>
<comment type="catalytic activity">
    <reaction evidence="1">
        <text>(2S,6S)-2,6-diaminopimelate + 2-oxoglutarate = (S)-2,3,4,5-tetrahydrodipicolinate + L-glutamate + H2O + H(+)</text>
        <dbReference type="Rhea" id="RHEA:23988"/>
        <dbReference type="ChEBI" id="CHEBI:15377"/>
        <dbReference type="ChEBI" id="CHEBI:15378"/>
        <dbReference type="ChEBI" id="CHEBI:16810"/>
        <dbReference type="ChEBI" id="CHEBI:16845"/>
        <dbReference type="ChEBI" id="CHEBI:29985"/>
        <dbReference type="ChEBI" id="CHEBI:57609"/>
        <dbReference type="EC" id="2.6.1.83"/>
    </reaction>
</comment>
<comment type="cofactor">
    <cofactor evidence="1">
        <name>pyridoxal 5'-phosphate</name>
        <dbReference type="ChEBI" id="CHEBI:597326"/>
    </cofactor>
</comment>
<comment type="pathway">
    <text evidence="1">Amino-acid biosynthesis; L-lysine biosynthesis via DAP pathway; LL-2,6-diaminopimelate from (S)-tetrahydrodipicolinate (aminotransferase route): step 1/1.</text>
</comment>
<comment type="subunit">
    <text evidence="1">Homodimer.</text>
</comment>
<comment type="similarity">
    <text evidence="1">Belongs to the class-I pyridoxal-phosphate-dependent aminotransferase family. LL-diaminopimelate aminotransferase subfamily.</text>
</comment>
<accession>B6YRL2</accession>
<evidence type="ECO:0000255" key="1">
    <source>
        <dbReference type="HAMAP-Rule" id="MF_01642"/>
    </source>
</evidence>
<organism>
    <name type="scientific">Azobacteroides pseudotrichonymphae genomovar. CFP2</name>
    <dbReference type="NCBI Taxonomy" id="511995"/>
    <lineage>
        <taxon>Bacteria</taxon>
        <taxon>Pseudomonadati</taxon>
        <taxon>Bacteroidota</taxon>
        <taxon>Bacteroidia</taxon>
        <taxon>Bacteroidales</taxon>
        <taxon>Candidatus Azobacteroides</taxon>
    </lineage>
</organism>
<sequence length="401" mass="44882">MVRINEHYIEISNSYLFAEIAERVNEYKQNNKNREVISLGIGDVTQAIAPAVVEAIHKATNEMACTKTLRGYAPYEGYDFLIQAILKNDFTDKGISIEADEIFVNDGAKSDTGNIGDILGQDNHIAITDPAYPVYVDTNRMAGRTIELLPCTPENYFVPNFPRKTADVIYLCYPNNPTGIALNAAQLKNWVDYALTNKSLILFDAAYEAYISQQDVPHSIYEISDAKKVAIEFRSFSKTAGFTGLRAGYTIVPKELIIQTSKGKMLSLNAMWRRRQSTKFNGTAYIVQRGAEAVYSIEGQKQIRKAIDYYRGNALTIKEGLESLGVTTYGGINAPYIWVKTPNNLTSWEFFDLLLNKIQVIGTPGDGFGQAGKGFFRFTAFGNKEDTLEAVLRMKKLLEFH</sequence>
<keyword id="KW-0032">Aminotransferase</keyword>
<keyword id="KW-0663">Pyridoxal phosphate</keyword>
<keyword id="KW-1185">Reference proteome</keyword>
<keyword id="KW-0808">Transferase</keyword>
<gene>
    <name evidence="1" type="primary">dapL</name>
    <name type="ordered locus">CFPG_571</name>
</gene>
<feature type="chain" id="PRO_1000186859" description="LL-diaminopimelate aminotransferase">
    <location>
        <begin position="1"/>
        <end position="401"/>
    </location>
</feature>
<feature type="binding site" evidence="1">
    <location>
        <position position="15"/>
    </location>
    <ligand>
        <name>substrate</name>
    </ligand>
</feature>
<feature type="binding site" evidence="1">
    <location>
        <position position="42"/>
    </location>
    <ligand>
        <name>substrate</name>
    </ligand>
</feature>
<feature type="binding site" evidence="1">
    <location>
        <position position="72"/>
    </location>
    <ligand>
        <name>pyridoxal 5'-phosphate</name>
        <dbReference type="ChEBI" id="CHEBI:597326"/>
    </ligand>
</feature>
<feature type="binding site" evidence="1">
    <location>
        <begin position="108"/>
        <end position="109"/>
    </location>
    <ligand>
        <name>pyridoxal 5'-phosphate</name>
        <dbReference type="ChEBI" id="CHEBI:597326"/>
    </ligand>
</feature>
<feature type="binding site" evidence="1">
    <location>
        <position position="109"/>
    </location>
    <ligand>
        <name>substrate</name>
    </ligand>
</feature>
<feature type="binding site" evidence="1">
    <location>
        <position position="132"/>
    </location>
    <ligand>
        <name>pyridoxal 5'-phosphate</name>
        <dbReference type="ChEBI" id="CHEBI:597326"/>
    </ligand>
</feature>
<feature type="binding site" evidence="1">
    <location>
        <position position="132"/>
    </location>
    <ligand>
        <name>substrate</name>
    </ligand>
</feature>
<feature type="binding site" evidence="1">
    <location>
        <position position="176"/>
    </location>
    <ligand>
        <name>pyridoxal 5'-phosphate</name>
        <dbReference type="ChEBI" id="CHEBI:597326"/>
    </ligand>
</feature>
<feature type="binding site" evidence="1">
    <location>
        <position position="176"/>
    </location>
    <ligand>
        <name>substrate</name>
    </ligand>
</feature>
<feature type="binding site" evidence="1">
    <location>
        <position position="207"/>
    </location>
    <ligand>
        <name>pyridoxal 5'-phosphate</name>
        <dbReference type="ChEBI" id="CHEBI:597326"/>
    </ligand>
</feature>
<feature type="binding site" evidence="1">
    <location>
        <begin position="235"/>
        <end position="237"/>
    </location>
    <ligand>
        <name>pyridoxal 5'-phosphate</name>
        <dbReference type="ChEBI" id="CHEBI:597326"/>
    </ligand>
</feature>
<feature type="binding site" evidence="1">
    <location>
        <position position="246"/>
    </location>
    <ligand>
        <name>pyridoxal 5'-phosphate</name>
        <dbReference type="ChEBI" id="CHEBI:597326"/>
    </ligand>
</feature>
<feature type="binding site" evidence="1">
    <location>
        <position position="281"/>
    </location>
    <ligand>
        <name>pyridoxal 5'-phosphate</name>
        <dbReference type="ChEBI" id="CHEBI:597326"/>
    </ligand>
</feature>
<feature type="binding site" evidence="1">
    <location>
        <position position="281"/>
    </location>
    <ligand>
        <name>substrate</name>
    </ligand>
</feature>
<feature type="binding site" evidence="1">
    <location>
        <position position="377"/>
    </location>
    <ligand>
        <name>substrate</name>
    </ligand>
</feature>
<feature type="modified residue" description="N6-(pyridoxal phosphate)lysine" evidence="1">
    <location>
        <position position="238"/>
    </location>
</feature>
<name>DAPAT_AZOPC</name>
<reference key="1">
    <citation type="journal article" date="2008" name="Science">
        <title>Genome of an endosymbiont coupling N2 fixation to cellulolysis within RT protist cells in termite gut.</title>
        <authorList>
            <person name="Hongoh Y."/>
            <person name="Sharma V.K."/>
            <person name="Prakash T."/>
            <person name="Noda S."/>
            <person name="Toh H."/>
            <person name="Taylor T.D."/>
            <person name="Kudo T."/>
            <person name="Sakaki Y."/>
            <person name="Toyoda A."/>
            <person name="Hattori M."/>
            <person name="Ohkuma M."/>
        </authorList>
    </citation>
    <scope>NUCLEOTIDE SEQUENCE [LARGE SCALE GENOMIC DNA]</scope>
</reference>
<proteinExistence type="inferred from homology"/>
<dbReference type="EC" id="2.6.1.83" evidence="1"/>
<dbReference type="EMBL" id="AP010656">
    <property type="protein sequence ID" value="BAG83834.1"/>
    <property type="molecule type" value="Genomic_DNA"/>
</dbReference>
<dbReference type="RefSeq" id="WP_012573594.1">
    <property type="nucleotide sequence ID" value="NC_011565.1"/>
</dbReference>
<dbReference type="SMR" id="B6YRL2"/>
<dbReference type="STRING" id="511995.CFPG_571"/>
<dbReference type="KEGG" id="aps:CFPG_571"/>
<dbReference type="eggNOG" id="COG0436">
    <property type="taxonomic scope" value="Bacteria"/>
</dbReference>
<dbReference type="HOGENOM" id="CLU_051433_0_0_10"/>
<dbReference type="OrthoDB" id="9813612at2"/>
<dbReference type="UniPathway" id="UPA00034">
    <property type="reaction ID" value="UER00466"/>
</dbReference>
<dbReference type="Proteomes" id="UP000000723">
    <property type="component" value="Chromosome"/>
</dbReference>
<dbReference type="GO" id="GO:0010285">
    <property type="term" value="F:L,L-diaminopimelate aminotransferase activity"/>
    <property type="evidence" value="ECO:0007669"/>
    <property type="project" value="UniProtKB-UniRule"/>
</dbReference>
<dbReference type="GO" id="GO:0030170">
    <property type="term" value="F:pyridoxal phosphate binding"/>
    <property type="evidence" value="ECO:0007669"/>
    <property type="project" value="UniProtKB-UniRule"/>
</dbReference>
<dbReference type="GO" id="GO:0033362">
    <property type="term" value="P:lysine biosynthetic process via diaminopimelate, diaminopimelate-aminotransferase pathway"/>
    <property type="evidence" value="ECO:0007669"/>
    <property type="project" value="UniProtKB-UniRule"/>
</dbReference>
<dbReference type="CDD" id="cd00609">
    <property type="entry name" value="AAT_like"/>
    <property type="match status" value="1"/>
</dbReference>
<dbReference type="FunFam" id="3.40.640.10:FF:000099">
    <property type="entry name" value="LL-diaminopimelate aminotransferase, chloroplastic"/>
    <property type="match status" value="1"/>
</dbReference>
<dbReference type="Gene3D" id="3.90.1150.10">
    <property type="entry name" value="Aspartate Aminotransferase, domain 1"/>
    <property type="match status" value="1"/>
</dbReference>
<dbReference type="Gene3D" id="3.40.640.10">
    <property type="entry name" value="Type I PLP-dependent aspartate aminotransferase-like (Major domain)"/>
    <property type="match status" value="1"/>
</dbReference>
<dbReference type="HAMAP" id="MF_01642">
    <property type="entry name" value="DapL_aminotrans_1"/>
    <property type="match status" value="1"/>
</dbReference>
<dbReference type="InterPro" id="IPR004839">
    <property type="entry name" value="Aminotransferase_I/II_large"/>
</dbReference>
<dbReference type="InterPro" id="IPR019942">
    <property type="entry name" value="DapL/ALD1"/>
</dbReference>
<dbReference type="InterPro" id="IPR004838">
    <property type="entry name" value="NHTrfase_class1_PyrdxlP-BS"/>
</dbReference>
<dbReference type="InterPro" id="IPR015424">
    <property type="entry name" value="PyrdxlP-dep_Trfase"/>
</dbReference>
<dbReference type="InterPro" id="IPR015421">
    <property type="entry name" value="PyrdxlP-dep_Trfase_major"/>
</dbReference>
<dbReference type="InterPro" id="IPR015422">
    <property type="entry name" value="PyrdxlP-dep_Trfase_small"/>
</dbReference>
<dbReference type="NCBIfam" id="TIGR03542">
    <property type="entry name" value="DAPAT_plant"/>
    <property type="match status" value="1"/>
</dbReference>
<dbReference type="PANTHER" id="PTHR43144">
    <property type="entry name" value="AMINOTRANSFERASE"/>
    <property type="match status" value="1"/>
</dbReference>
<dbReference type="Pfam" id="PF00155">
    <property type="entry name" value="Aminotran_1_2"/>
    <property type="match status" value="1"/>
</dbReference>
<dbReference type="SUPFAM" id="SSF53383">
    <property type="entry name" value="PLP-dependent transferases"/>
    <property type="match status" value="1"/>
</dbReference>
<dbReference type="PROSITE" id="PS00105">
    <property type="entry name" value="AA_TRANSFER_CLASS_1"/>
    <property type="match status" value="1"/>
</dbReference>
<protein>
    <recommendedName>
        <fullName evidence="1">LL-diaminopimelate aminotransferase</fullName>
        <shortName evidence="1">DAP-AT</shortName>
        <shortName evidence="1">DAP-aminotransferase</shortName>
        <shortName evidence="1">LL-DAP-aminotransferase</shortName>
        <ecNumber evidence="1">2.6.1.83</ecNumber>
    </recommendedName>
</protein>